<name>AZOR_ALKEH</name>
<protein>
    <recommendedName>
        <fullName evidence="1">FMN-dependent NADH:quinone oxidoreductase</fullName>
        <ecNumber evidence="1">1.6.5.-</ecNumber>
    </recommendedName>
    <alternativeName>
        <fullName evidence="1">Azo-dye reductase</fullName>
    </alternativeName>
    <alternativeName>
        <fullName evidence="1">FMN-dependent NADH-azo compound oxidoreductase</fullName>
    </alternativeName>
    <alternativeName>
        <fullName evidence="1">FMN-dependent NADH-azoreductase</fullName>
        <ecNumber evidence="1">1.7.1.17</ecNumber>
    </alternativeName>
</protein>
<feature type="chain" id="PRO_1000066492" description="FMN-dependent NADH:quinone oxidoreductase">
    <location>
        <begin position="1"/>
        <end position="202"/>
    </location>
</feature>
<feature type="binding site" evidence="1">
    <location>
        <position position="10"/>
    </location>
    <ligand>
        <name>FMN</name>
        <dbReference type="ChEBI" id="CHEBI:58210"/>
    </ligand>
</feature>
<feature type="binding site" evidence="1">
    <location>
        <begin position="95"/>
        <end position="98"/>
    </location>
    <ligand>
        <name>FMN</name>
        <dbReference type="ChEBI" id="CHEBI:58210"/>
    </ligand>
</feature>
<sequence length="202" mass="22139">MTTLLLVHSSARTGGSRTREMADILTAEWHARGDNHQVRVVDLADTPPPHVDAATIRHFFGLAGAEEPATASLALSDTWIEQLLQADALAFAVPMYNFSLPSTLKAWLDHVIRPRRTFRKVADGELEGLAGPKPALVMTASGGLFADTSLDHLRPYMKTALAFMGIDSPRFVDWEGTARADIDPAAQRRTVTAQLREWVHAC</sequence>
<proteinExistence type="inferred from homology"/>
<keyword id="KW-0285">Flavoprotein</keyword>
<keyword id="KW-0288">FMN</keyword>
<keyword id="KW-0520">NAD</keyword>
<keyword id="KW-0560">Oxidoreductase</keyword>
<keyword id="KW-1185">Reference proteome</keyword>
<accession>Q0A5T4</accession>
<organism>
    <name type="scientific">Alkalilimnicola ehrlichii (strain ATCC BAA-1101 / DSM 17681 / MLHE-1)</name>
    <dbReference type="NCBI Taxonomy" id="187272"/>
    <lineage>
        <taxon>Bacteria</taxon>
        <taxon>Pseudomonadati</taxon>
        <taxon>Pseudomonadota</taxon>
        <taxon>Gammaproteobacteria</taxon>
        <taxon>Chromatiales</taxon>
        <taxon>Ectothiorhodospiraceae</taxon>
        <taxon>Alkalilimnicola</taxon>
    </lineage>
</organism>
<reference key="1">
    <citation type="submission" date="2006-08" db="EMBL/GenBank/DDBJ databases">
        <title>Complete sequence of Alkalilimnicola ehrilichei MLHE-1.</title>
        <authorList>
            <person name="Copeland A."/>
            <person name="Lucas S."/>
            <person name="Lapidus A."/>
            <person name="Barry K."/>
            <person name="Detter J.C."/>
            <person name="Glavina del Rio T."/>
            <person name="Hammon N."/>
            <person name="Israni S."/>
            <person name="Dalin E."/>
            <person name="Tice H."/>
            <person name="Pitluck S."/>
            <person name="Sims D."/>
            <person name="Brettin T."/>
            <person name="Bruce D."/>
            <person name="Han C."/>
            <person name="Tapia R."/>
            <person name="Gilna P."/>
            <person name="Schmutz J."/>
            <person name="Larimer F."/>
            <person name="Land M."/>
            <person name="Hauser L."/>
            <person name="Kyrpides N."/>
            <person name="Mikhailova N."/>
            <person name="Oremland R.S."/>
            <person name="Hoeft S.E."/>
            <person name="Switzer-Blum J."/>
            <person name="Kulp T."/>
            <person name="King G."/>
            <person name="Tabita R."/>
            <person name="Witte B."/>
            <person name="Santini J.M."/>
            <person name="Basu P."/>
            <person name="Hollibaugh J.T."/>
            <person name="Xie G."/>
            <person name="Stolz J.F."/>
            <person name="Richardson P."/>
        </authorList>
    </citation>
    <scope>NUCLEOTIDE SEQUENCE [LARGE SCALE GENOMIC DNA]</scope>
    <source>
        <strain>ATCC BAA-1101 / DSM 17681 / MLHE-1</strain>
    </source>
</reference>
<gene>
    <name evidence="1" type="primary">azoR</name>
    <name type="ordered locus">Mlg_2463</name>
</gene>
<dbReference type="EC" id="1.6.5.-" evidence="1"/>
<dbReference type="EC" id="1.7.1.17" evidence="1"/>
<dbReference type="EMBL" id="CP000453">
    <property type="protein sequence ID" value="ABI57803.1"/>
    <property type="molecule type" value="Genomic_DNA"/>
</dbReference>
<dbReference type="RefSeq" id="WP_011630196.1">
    <property type="nucleotide sequence ID" value="NC_008340.1"/>
</dbReference>
<dbReference type="SMR" id="Q0A5T4"/>
<dbReference type="KEGG" id="aeh:Mlg_2463"/>
<dbReference type="eggNOG" id="COG1182">
    <property type="taxonomic scope" value="Bacteria"/>
</dbReference>
<dbReference type="HOGENOM" id="CLU_088964_0_0_6"/>
<dbReference type="OrthoDB" id="9787136at2"/>
<dbReference type="Proteomes" id="UP000001962">
    <property type="component" value="Chromosome"/>
</dbReference>
<dbReference type="GO" id="GO:0009055">
    <property type="term" value="F:electron transfer activity"/>
    <property type="evidence" value="ECO:0007669"/>
    <property type="project" value="UniProtKB-UniRule"/>
</dbReference>
<dbReference type="GO" id="GO:0010181">
    <property type="term" value="F:FMN binding"/>
    <property type="evidence" value="ECO:0007669"/>
    <property type="project" value="UniProtKB-UniRule"/>
</dbReference>
<dbReference type="GO" id="GO:0016652">
    <property type="term" value="F:oxidoreductase activity, acting on NAD(P)H as acceptor"/>
    <property type="evidence" value="ECO:0007669"/>
    <property type="project" value="UniProtKB-UniRule"/>
</dbReference>
<dbReference type="GO" id="GO:0016655">
    <property type="term" value="F:oxidoreductase activity, acting on NAD(P)H, quinone or similar compound as acceptor"/>
    <property type="evidence" value="ECO:0007669"/>
    <property type="project" value="InterPro"/>
</dbReference>
<dbReference type="Gene3D" id="3.40.50.360">
    <property type="match status" value="1"/>
</dbReference>
<dbReference type="HAMAP" id="MF_01216">
    <property type="entry name" value="Azoreductase_type1"/>
    <property type="match status" value="1"/>
</dbReference>
<dbReference type="InterPro" id="IPR003680">
    <property type="entry name" value="Flavodoxin_fold"/>
</dbReference>
<dbReference type="InterPro" id="IPR029039">
    <property type="entry name" value="Flavoprotein-like_sf"/>
</dbReference>
<dbReference type="InterPro" id="IPR050104">
    <property type="entry name" value="FMN-dep_NADH:Q_OxRdtase_AzoR1"/>
</dbReference>
<dbReference type="InterPro" id="IPR023048">
    <property type="entry name" value="NADH:quinone_OxRdtase_FMN_depd"/>
</dbReference>
<dbReference type="PANTHER" id="PTHR43741">
    <property type="entry name" value="FMN-DEPENDENT NADH-AZOREDUCTASE 1"/>
    <property type="match status" value="1"/>
</dbReference>
<dbReference type="PANTHER" id="PTHR43741:SF2">
    <property type="entry name" value="FMN-DEPENDENT NADH:QUINONE OXIDOREDUCTASE"/>
    <property type="match status" value="1"/>
</dbReference>
<dbReference type="Pfam" id="PF02525">
    <property type="entry name" value="Flavodoxin_2"/>
    <property type="match status" value="1"/>
</dbReference>
<dbReference type="SUPFAM" id="SSF52218">
    <property type="entry name" value="Flavoproteins"/>
    <property type="match status" value="1"/>
</dbReference>
<evidence type="ECO:0000255" key="1">
    <source>
        <dbReference type="HAMAP-Rule" id="MF_01216"/>
    </source>
</evidence>
<comment type="function">
    <text evidence="1">Quinone reductase that provides resistance to thiol-specific stress caused by electrophilic quinones.</text>
</comment>
<comment type="function">
    <text evidence="1">Also exhibits azoreductase activity. Catalyzes the reductive cleavage of the azo bond in aromatic azo compounds to the corresponding amines.</text>
</comment>
<comment type="catalytic activity">
    <reaction evidence="1">
        <text>2 a quinone + NADH + H(+) = 2 a 1,4-benzosemiquinone + NAD(+)</text>
        <dbReference type="Rhea" id="RHEA:65952"/>
        <dbReference type="ChEBI" id="CHEBI:15378"/>
        <dbReference type="ChEBI" id="CHEBI:57540"/>
        <dbReference type="ChEBI" id="CHEBI:57945"/>
        <dbReference type="ChEBI" id="CHEBI:132124"/>
        <dbReference type="ChEBI" id="CHEBI:134225"/>
    </reaction>
</comment>
<comment type="catalytic activity">
    <reaction evidence="1">
        <text>N,N-dimethyl-1,4-phenylenediamine + anthranilate + 2 NAD(+) = 2-(4-dimethylaminophenyl)diazenylbenzoate + 2 NADH + 2 H(+)</text>
        <dbReference type="Rhea" id="RHEA:55872"/>
        <dbReference type="ChEBI" id="CHEBI:15378"/>
        <dbReference type="ChEBI" id="CHEBI:15783"/>
        <dbReference type="ChEBI" id="CHEBI:16567"/>
        <dbReference type="ChEBI" id="CHEBI:57540"/>
        <dbReference type="ChEBI" id="CHEBI:57945"/>
        <dbReference type="ChEBI" id="CHEBI:71579"/>
        <dbReference type="EC" id="1.7.1.17"/>
    </reaction>
</comment>
<comment type="cofactor">
    <cofactor evidence="1">
        <name>FMN</name>
        <dbReference type="ChEBI" id="CHEBI:58210"/>
    </cofactor>
    <text evidence="1">Binds 1 FMN per subunit.</text>
</comment>
<comment type="subunit">
    <text evidence="1">Homodimer.</text>
</comment>
<comment type="similarity">
    <text evidence="1">Belongs to the azoreductase type 1 family.</text>
</comment>